<name>ARC_BIFLO</name>
<organism>
    <name type="scientific">Bifidobacterium longum (strain NCC 2705)</name>
    <dbReference type="NCBI Taxonomy" id="206672"/>
    <lineage>
        <taxon>Bacteria</taxon>
        <taxon>Bacillati</taxon>
        <taxon>Actinomycetota</taxon>
        <taxon>Actinomycetes</taxon>
        <taxon>Bifidobacteriales</taxon>
        <taxon>Bifidobacteriaceae</taxon>
        <taxon>Bifidobacterium</taxon>
    </lineage>
</organism>
<dbReference type="EMBL" id="AE014295">
    <property type="protein sequence ID" value="AAN25577.1"/>
    <property type="molecule type" value="Genomic_DNA"/>
</dbReference>
<dbReference type="RefSeq" id="NP_696941.1">
    <property type="nucleotide sequence ID" value="NC_004307.2"/>
</dbReference>
<dbReference type="RefSeq" id="WP_007053165.1">
    <property type="nucleotide sequence ID" value="NC_004307.2"/>
</dbReference>
<dbReference type="SMR" id="Q8G3G6"/>
<dbReference type="STRING" id="206672.BL1794"/>
<dbReference type="EnsemblBacteria" id="AAN25577">
    <property type="protein sequence ID" value="AAN25577"/>
    <property type="gene ID" value="BL1794"/>
</dbReference>
<dbReference type="KEGG" id="blo:BL1794"/>
<dbReference type="PATRIC" id="fig|206672.9.peg.1847"/>
<dbReference type="HOGENOM" id="CLU_036054_0_0_11"/>
<dbReference type="OrthoDB" id="9809379at2"/>
<dbReference type="PhylomeDB" id="Q8G3G6"/>
<dbReference type="Proteomes" id="UP000000439">
    <property type="component" value="Chromosome"/>
</dbReference>
<dbReference type="GO" id="GO:0000502">
    <property type="term" value="C:proteasome complex"/>
    <property type="evidence" value="ECO:0007669"/>
    <property type="project" value="InterPro"/>
</dbReference>
<dbReference type="GO" id="GO:0005524">
    <property type="term" value="F:ATP binding"/>
    <property type="evidence" value="ECO:0007669"/>
    <property type="project" value="UniProtKB-UniRule"/>
</dbReference>
<dbReference type="GO" id="GO:0016887">
    <property type="term" value="F:ATP hydrolysis activity"/>
    <property type="evidence" value="ECO:0007669"/>
    <property type="project" value="UniProtKB-UniRule"/>
</dbReference>
<dbReference type="GO" id="GO:0019941">
    <property type="term" value="P:modification-dependent protein catabolic process"/>
    <property type="evidence" value="ECO:0007669"/>
    <property type="project" value="InterPro"/>
</dbReference>
<dbReference type="GO" id="GO:0010498">
    <property type="term" value="P:proteasomal protein catabolic process"/>
    <property type="evidence" value="ECO:0007669"/>
    <property type="project" value="InterPro"/>
</dbReference>
<dbReference type="FunFam" id="3.40.50.300:FF:001025">
    <property type="entry name" value="ATPase family, AAA domain-containing 2B"/>
    <property type="match status" value="1"/>
</dbReference>
<dbReference type="Gene3D" id="1.10.8.60">
    <property type="match status" value="1"/>
</dbReference>
<dbReference type="Gene3D" id="2.40.50.140">
    <property type="entry name" value="Nucleic acid-binding proteins"/>
    <property type="match status" value="2"/>
</dbReference>
<dbReference type="Gene3D" id="3.40.50.300">
    <property type="entry name" value="P-loop containing nucleotide triphosphate hydrolases"/>
    <property type="match status" value="1"/>
</dbReference>
<dbReference type="HAMAP" id="MF_02112">
    <property type="entry name" value="ARC_ATPase"/>
    <property type="match status" value="1"/>
</dbReference>
<dbReference type="InterPro" id="IPR003593">
    <property type="entry name" value="AAA+_ATPase"/>
</dbReference>
<dbReference type="InterPro" id="IPR050168">
    <property type="entry name" value="AAA_ATPase_domain"/>
</dbReference>
<dbReference type="InterPro" id="IPR003959">
    <property type="entry name" value="ATPase_AAA_core"/>
</dbReference>
<dbReference type="InterPro" id="IPR003960">
    <property type="entry name" value="ATPase_AAA_CS"/>
</dbReference>
<dbReference type="InterPro" id="IPR012340">
    <property type="entry name" value="NA-bd_OB-fold"/>
</dbReference>
<dbReference type="InterPro" id="IPR027417">
    <property type="entry name" value="P-loop_NTPase"/>
</dbReference>
<dbReference type="InterPro" id="IPR032501">
    <property type="entry name" value="Prot_ATP_ID_OB_2nd"/>
</dbReference>
<dbReference type="InterPro" id="IPR041626">
    <property type="entry name" value="Prot_ATP_ID_OB_N"/>
</dbReference>
<dbReference type="InterPro" id="IPR022482">
    <property type="entry name" value="Proteasome_ATPase"/>
</dbReference>
<dbReference type="NCBIfam" id="TIGR03689">
    <property type="entry name" value="pup_AAA"/>
    <property type="match status" value="1"/>
</dbReference>
<dbReference type="PANTHER" id="PTHR23077">
    <property type="entry name" value="AAA-FAMILY ATPASE"/>
    <property type="match status" value="1"/>
</dbReference>
<dbReference type="PANTHER" id="PTHR23077:SF144">
    <property type="entry name" value="PROTEASOME-ASSOCIATED ATPASE"/>
    <property type="match status" value="1"/>
</dbReference>
<dbReference type="Pfam" id="PF00004">
    <property type="entry name" value="AAA"/>
    <property type="match status" value="1"/>
</dbReference>
<dbReference type="Pfam" id="PF16450">
    <property type="entry name" value="Prot_ATP_ID_OB_C"/>
    <property type="match status" value="1"/>
</dbReference>
<dbReference type="Pfam" id="PF17758">
    <property type="entry name" value="Prot_ATP_ID_OB_N"/>
    <property type="match status" value="1"/>
</dbReference>
<dbReference type="SMART" id="SM00382">
    <property type="entry name" value="AAA"/>
    <property type="match status" value="1"/>
</dbReference>
<dbReference type="SUPFAM" id="SSF52540">
    <property type="entry name" value="P-loop containing nucleoside triphosphate hydrolases"/>
    <property type="match status" value="1"/>
</dbReference>
<dbReference type="PROSITE" id="PS00674">
    <property type="entry name" value="AAA"/>
    <property type="match status" value="1"/>
</dbReference>
<reference key="1">
    <citation type="journal article" date="2002" name="Proc. Natl. Acad. Sci. U.S.A.">
        <title>The genome sequence of Bifidobacterium longum reflects its adaptation to the human gastrointestinal tract.</title>
        <authorList>
            <person name="Schell M.A."/>
            <person name="Karmirantzou M."/>
            <person name="Snel B."/>
            <person name="Vilanova D."/>
            <person name="Berger B."/>
            <person name="Pessi G."/>
            <person name="Zwahlen M.-C."/>
            <person name="Desiere F."/>
            <person name="Bork P."/>
            <person name="Delley M."/>
            <person name="Pridmore R.D."/>
            <person name="Arigoni F."/>
        </authorList>
    </citation>
    <scope>NUCLEOTIDE SEQUENCE [LARGE SCALE GENOMIC DNA]</scope>
    <source>
        <strain>NCC 2705</strain>
    </source>
</reference>
<sequence length="521" mass="56478">MSDTEDLAALNDRLMAKNHALAEALSRAGKELTKAKSQLAQLAQPPLTFATMVKVDSTRTDEDGIQHASAEVISGTRRMVVPVASNVNAARLTAGATVMLNEKLVLVEQRDADTVGQIRSVKQVLDDGRLIVTDASGNPVLIRRSGALAYAGINQGDRIIVDPSVRLAIEALPAEGDKDLVLEETPDVTFADIGGLDSEIGRIRDAVQLPFQHRALFERYDLKPPKGVLLYGPPGNGKTMIAKAVANALCEGGYDTNGDGSISPAETHVKGVFLSVKGPELLNKYVGESERLIRLIFQRARERAADGNPVVVFIDEMDSLLRTRGSGVSSDVETTIVPQFLSELDGVESLDNVMVIGASNRVDMIDPAVLRPGRLDVKIRVGRPKTNQAIAIVDHYLTDDLPLEDGVDAHALSAVLVHDIYGTSERRHLCDVQEENGQWHALFLADVVSGAMLKNIVDRAKTRAVKESIETGLDVALTVPLLAAAVEDEYRETRDSMADVDPEQWSRINGMDPIRRIRTAE</sequence>
<accession>Q8G3G6</accession>
<keyword id="KW-0067">ATP-binding</keyword>
<keyword id="KW-0175">Coiled coil</keyword>
<keyword id="KW-0547">Nucleotide-binding</keyword>
<keyword id="KW-1185">Reference proteome</keyword>
<feature type="chain" id="PRO_0000396969" description="AAA ATPase forming ring-shaped complexes">
    <location>
        <begin position="1"/>
        <end position="521"/>
    </location>
</feature>
<feature type="coiled-coil region" evidence="1">
    <location>
        <begin position="4"/>
        <end position="44"/>
    </location>
</feature>
<feature type="binding site" evidence="1">
    <location>
        <begin position="235"/>
        <end position="240"/>
    </location>
    <ligand>
        <name>ATP</name>
        <dbReference type="ChEBI" id="CHEBI:30616"/>
    </ligand>
</feature>
<comment type="subunit">
    <text evidence="1">Homohexamer. Assembles into a hexameric ring structure.</text>
</comment>
<comment type="similarity">
    <text evidence="1">Belongs to the AAA ATPase family.</text>
</comment>
<evidence type="ECO:0000255" key="1">
    <source>
        <dbReference type="HAMAP-Rule" id="MF_02112"/>
    </source>
</evidence>
<gene>
    <name evidence="1" type="primary">arc</name>
    <name type="ordered locus">BL1794</name>
</gene>
<proteinExistence type="inferred from homology"/>
<protein>
    <recommendedName>
        <fullName evidence="1">AAA ATPase forming ring-shaped complexes</fullName>
        <shortName evidence="1">ARC</shortName>
    </recommendedName>
</protein>